<proteinExistence type="inferred from homology"/>
<organism>
    <name type="scientific">Staphylococcus haemolyticus (strain JCSC1435)</name>
    <dbReference type="NCBI Taxonomy" id="279808"/>
    <lineage>
        <taxon>Bacteria</taxon>
        <taxon>Bacillati</taxon>
        <taxon>Bacillota</taxon>
        <taxon>Bacilli</taxon>
        <taxon>Bacillales</taxon>
        <taxon>Staphylococcaceae</taxon>
        <taxon>Staphylococcus</taxon>
    </lineage>
</organism>
<reference key="1">
    <citation type="journal article" date="2005" name="J. Bacteriol.">
        <title>Whole-genome sequencing of Staphylococcus haemolyticus uncovers the extreme plasticity of its genome and the evolution of human-colonizing staphylococcal species.</title>
        <authorList>
            <person name="Takeuchi F."/>
            <person name="Watanabe S."/>
            <person name="Baba T."/>
            <person name="Yuzawa H."/>
            <person name="Ito T."/>
            <person name="Morimoto Y."/>
            <person name="Kuroda M."/>
            <person name="Cui L."/>
            <person name="Takahashi M."/>
            <person name="Ankai A."/>
            <person name="Baba S."/>
            <person name="Fukui S."/>
            <person name="Lee J.C."/>
            <person name="Hiramatsu K."/>
        </authorList>
    </citation>
    <scope>NUCLEOTIDE SEQUENCE [LARGE SCALE GENOMIC DNA]</scope>
    <source>
        <strain>JCSC1435</strain>
    </source>
</reference>
<evidence type="ECO:0000255" key="1">
    <source>
        <dbReference type="HAMAP-Rule" id="MF_00114"/>
    </source>
</evidence>
<comment type="function">
    <text evidence="1">Catalyzes a reversible aldol reaction between acetaldehyde and D-glyceraldehyde 3-phosphate to generate 2-deoxy-D-ribose 5-phosphate.</text>
</comment>
<comment type="catalytic activity">
    <reaction evidence="1">
        <text>2-deoxy-D-ribose 5-phosphate = D-glyceraldehyde 3-phosphate + acetaldehyde</text>
        <dbReference type="Rhea" id="RHEA:12821"/>
        <dbReference type="ChEBI" id="CHEBI:15343"/>
        <dbReference type="ChEBI" id="CHEBI:59776"/>
        <dbReference type="ChEBI" id="CHEBI:62877"/>
        <dbReference type="EC" id="4.1.2.4"/>
    </reaction>
</comment>
<comment type="pathway">
    <text evidence="1">Carbohydrate degradation; 2-deoxy-D-ribose 1-phosphate degradation; D-glyceraldehyde 3-phosphate and acetaldehyde from 2-deoxy-alpha-D-ribose 1-phosphate: step 2/2.</text>
</comment>
<comment type="subcellular location">
    <subcellularLocation>
        <location evidence="1">Cytoplasm</location>
    </subcellularLocation>
</comment>
<comment type="similarity">
    <text evidence="1">Belongs to the DeoC/FbaB aldolase family. DeoC type 1 subfamily.</text>
</comment>
<dbReference type="EC" id="4.1.2.4" evidence="1"/>
<dbReference type="EMBL" id="AP006716">
    <property type="protein sequence ID" value="BAE04206.1"/>
    <property type="molecule type" value="Genomic_DNA"/>
</dbReference>
<dbReference type="RefSeq" id="WP_011275208.1">
    <property type="nucleotide sequence ID" value="NC_007168.1"/>
</dbReference>
<dbReference type="SMR" id="Q4L819"/>
<dbReference type="KEGG" id="sha:SH0897"/>
<dbReference type="eggNOG" id="COG0274">
    <property type="taxonomic scope" value="Bacteria"/>
</dbReference>
<dbReference type="HOGENOM" id="CLU_053595_0_1_9"/>
<dbReference type="OrthoDB" id="9778711at2"/>
<dbReference type="UniPathway" id="UPA00002">
    <property type="reaction ID" value="UER00468"/>
</dbReference>
<dbReference type="Proteomes" id="UP000000543">
    <property type="component" value="Chromosome"/>
</dbReference>
<dbReference type="GO" id="GO:0005737">
    <property type="term" value="C:cytoplasm"/>
    <property type="evidence" value="ECO:0007669"/>
    <property type="project" value="UniProtKB-SubCell"/>
</dbReference>
<dbReference type="GO" id="GO:0004139">
    <property type="term" value="F:deoxyribose-phosphate aldolase activity"/>
    <property type="evidence" value="ECO:0007669"/>
    <property type="project" value="UniProtKB-UniRule"/>
</dbReference>
<dbReference type="GO" id="GO:0006018">
    <property type="term" value="P:2-deoxyribose 1-phosphate catabolic process"/>
    <property type="evidence" value="ECO:0007669"/>
    <property type="project" value="UniProtKB-UniRule"/>
</dbReference>
<dbReference type="GO" id="GO:0016052">
    <property type="term" value="P:carbohydrate catabolic process"/>
    <property type="evidence" value="ECO:0007669"/>
    <property type="project" value="TreeGrafter"/>
</dbReference>
<dbReference type="GO" id="GO:0009264">
    <property type="term" value="P:deoxyribonucleotide catabolic process"/>
    <property type="evidence" value="ECO:0007669"/>
    <property type="project" value="InterPro"/>
</dbReference>
<dbReference type="CDD" id="cd00959">
    <property type="entry name" value="DeoC"/>
    <property type="match status" value="1"/>
</dbReference>
<dbReference type="FunFam" id="3.20.20.70:FF:000044">
    <property type="entry name" value="Deoxyribose-phosphate aldolase"/>
    <property type="match status" value="1"/>
</dbReference>
<dbReference type="Gene3D" id="3.20.20.70">
    <property type="entry name" value="Aldolase class I"/>
    <property type="match status" value="1"/>
</dbReference>
<dbReference type="HAMAP" id="MF_00114">
    <property type="entry name" value="DeoC_type1"/>
    <property type="match status" value="1"/>
</dbReference>
<dbReference type="InterPro" id="IPR013785">
    <property type="entry name" value="Aldolase_TIM"/>
</dbReference>
<dbReference type="InterPro" id="IPR011343">
    <property type="entry name" value="DeoC"/>
</dbReference>
<dbReference type="InterPro" id="IPR002915">
    <property type="entry name" value="DeoC/FbaB/LacD_aldolase"/>
</dbReference>
<dbReference type="InterPro" id="IPR028581">
    <property type="entry name" value="DeoC_typeI"/>
</dbReference>
<dbReference type="NCBIfam" id="TIGR00126">
    <property type="entry name" value="deoC"/>
    <property type="match status" value="1"/>
</dbReference>
<dbReference type="PANTHER" id="PTHR10889">
    <property type="entry name" value="DEOXYRIBOSE-PHOSPHATE ALDOLASE"/>
    <property type="match status" value="1"/>
</dbReference>
<dbReference type="PANTHER" id="PTHR10889:SF1">
    <property type="entry name" value="DEOXYRIBOSE-PHOSPHATE ALDOLASE"/>
    <property type="match status" value="1"/>
</dbReference>
<dbReference type="Pfam" id="PF01791">
    <property type="entry name" value="DeoC"/>
    <property type="match status" value="1"/>
</dbReference>
<dbReference type="PIRSF" id="PIRSF001357">
    <property type="entry name" value="DeoC"/>
    <property type="match status" value="1"/>
</dbReference>
<dbReference type="SMART" id="SM01133">
    <property type="entry name" value="DeoC"/>
    <property type="match status" value="1"/>
</dbReference>
<dbReference type="SUPFAM" id="SSF51569">
    <property type="entry name" value="Aldolase"/>
    <property type="match status" value="1"/>
</dbReference>
<gene>
    <name evidence="1" type="primary">deoC</name>
    <name type="synonym">dra</name>
    <name type="ordered locus">SH0897</name>
</gene>
<feature type="chain" id="PRO_0000231565" description="Deoxyribose-phosphate aldolase">
    <location>
        <begin position="1"/>
        <end position="220"/>
    </location>
</feature>
<feature type="active site" description="Proton donor/acceptor" evidence="1">
    <location>
        <position position="89"/>
    </location>
</feature>
<feature type="active site" description="Schiff-base intermediate with acetaldehyde" evidence="1">
    <location>
        <position position="151"/>
    </location>
</feature>
<feature type="active site" description="Proton donor/acceptor" evidence="1">
    <location>
        <position position="180"/>
    </location>
</feature>
<keyword id="KW-0963">Cytoplasm</keyword>
<keyword id="KW-0456">Lyase</keyword>
<keyword id="KW-0704">Schiff base</keyword>
<accession>Q4L819</accession>
<protein>
    <recommendedName>
        <fullName evidence="1">Deoxyribose-phosphate aldolase</fullName>
        <shortName evidence="1">DERA</shortName>
        <ecNumber evidence="1">4.1.2.4</ecNumber>
    </recommendedName>
    <alternativeName>
        <fullName evidence="1">2-deoxy-D-ribose 5-phosphate aldolase</fullName>
    </alternativeName>
    <alternativeName>
        <fullName evidence="1">Phosphodeoxyriboaldolase</fullName>
        <shortName evidence="1">Deoxyriboaldolase</shortName>
    </alternativeName>
</protein>
<name>DEOC_STAHJ</name>
<sequence>MNYAKFIDHTLLKPESTRQQIDQIIDEAKEYNFKSICVNPTHVKYAAERLNDSGVLVCTVIGFPLGATTTATKIFETEDAIKNGATEIDMVINIGALKDGRFEDVQKDIEGVVGAANGKTVKVIIETVLLSDEEKVKASELAKAAGADFVKTSTGFAGGGATPEDVKLMKDTVGDELEVKASGGVRSLEDFNKMIDAGATRIGASAGVQIIQGLESDSDY</sequence>